<comment type="function">
    <text evidence="2">Catalyzes the activation of 2-hydroxy-7-methoxy-5-methyl-1-naphthoate in the biosynthesis of the naphthoate moiety of the neocarzinostatin chromophore. Also catalyzes the activation of other 1-naphthoic acid analogs such as 2-hydroxy-5-methyl-1-naphthoate or 2,7-dihydroxy-5-methyl-1-naphthoate in vitro.</text>
</comment>
<comment type="catalytic activity">
    <reaction evidence="2">
        <text>2-hydroxy-7-methoxy-5-methyl-1-naphthoate + ATP + CoA = 2-hydroxy-7-methoxy-5-methyl-1-naphthoyl-CoA + AMP + diphosphate</text>
        <dbReference type="Rhea" id="RHEA:41644"/>
        <dbReference type="ChEBI" id="CHEBI:30616"/>
        <dbReference type="ChEBI" id="CHEBI:33019"/>
        <dbReference type="ChEBI" id="CHEBI:57287"/>
        <dbReference type="ChEBI" id="CHEBI:78282"/>
        <dbReference type="ChEBI" id="CHEBI:78376"/>
        <dbReference type="ChEBI" id="CHEBI:456215"/>
        <dbReference type="EC" id="6.2.1.43"/>
    </reaction>
</comment>
<comment type="biophysicochemical properties">
    <kinetics>
        <KM evidence="2">0.59 uM for 2-hydroxy-7-methoxy-5-methyl-1-naphthoate</KM>
        <KM evidence="2">0.25 uM for 2-hydroxy-5-methyl-1-naphthoate</KM>
        <KM evidence="2">3.1 uM for 2,7-dihydroxy-5-methyl-1-naphthoate</KM>
        <text evidence="2">kcat is 38 min(-1) with 2-hydroxy-7-methoxy-5-methyl-1-naphthoate as substrate. kcat is 8.1 min(-1) with 2-hydroxy-5-methyl-1-naphthoate as substrate. kcat is 93 min(-1) with 2,7-dihydroxy-5-methyl-1-naphthoate as substrate.</text>
    </kinetics>
</comment>
<comment type="pathway">
    <text evidence="5">Antibiotic biosynthesis.</text>
</comment>
<comment type="similarity">
    <text evidence="4">Belongs to the ATP-dependent AMP-binding enzyme family.</text>
</comment>
<proteinExistence type="evidence at protein level"/>
<protein>
    <recommendedName>
        <fullName evidence="4">2-hydroxy-7-methoxy-5-methyl-1-naphthoate--CoA ligase</fullName>
        <ecNumber evidence="2">6.2.1.43</ecNumber>
    </recommendedName>
    <alternativeName>
        <fullName evidence="4">Neocarzinostatin biosynthesis protein B2</fullName>
    </alternativeName>
</protein>
<keyword id="KW-0045">Antibiotic biosynthesis</keyword>
<keyword id="KW-0067">ATP-binding</keyword>
<keyword id="KW-0436">Ligase</keyword>
<keyword id="KW-0547">Nucleotide-binding</keyword>
<organism>
    <name type="scientific">Streptomyces carzinostaticus</name>
    <dbReference type="NCBI Taxonomy" id="1897"/>
    <lineage>
        <taxon>Bacteria</taxon>
        <taxon>Bacillati</taxon>
        <taxon>Actinomycetota</taxon>
        <taxon>Actinomycetes</taxon>
        <taxon>Kitasatosporales</taxon>
        <taxon>Streptomycetaceae</taxon>
        <taxon>Streptomyces</taxon>
    </lineage>
</organism>
<gene>
    <name evidence="3" type="primary">ncsB2</name>
</gene>
<reference key="1">
    <citation type="journal article" date="2005" name="Chem. Biol.">
        <title>The neocarzinostatin biosynthetic gene cluster from Streptomyces carzinostaticus ATCC 15944 involving two iterative type I polyketide synthases.</title>
        <authorList>
            <person name="Liu W."/>
            <person name="Nonaka K."/>
            <person name="Nie L."/>
            <person name="Zhang J."/>
            <person name="Christenson S.D."/>
            <person name="Bae J."/>
            <person name="Van Lanen S.G."/>
            <person name="Zazopoulos E."/>
            <person name="Farnet C.M."/>
            <person name="Yang C.F."/>
            <person name="Shen B."/>
        </authorList>
    </citation>
    <scope>NUCLEOTIDE SEQUENCE [GENOMIC DNA]</scope>
    <scope>PATHWAY</scope>
    <source>
        <strain>ATCC 15944 / E-793 / F-51</strain>
    </source>
</reference>
<reference key="2">
    <citation type="journal article" date="2007" name="J. Am. Chem. Soc.">
        <title>Characterization of NcsB2 as a promiscuous naphthoic acid/coenzyme A ligase integral to the biosynthesis of the enediyne antitumor antibiotic neocarzinostatin.</title>
        <authorList>
            <person name="Cooke H.A."/>
            <person name="Zhang J."/>
            <person name="Griffin M.A."/>
            <person name="Nonaka K."/>
            <person name="Van Lanen S.G."/>
            <person name="Shen B."/>
            <person name="Bruner S.D."/>
        </authorList>
    </citation>
    <scope>FUNCTION</scope>
    <scope>CATALYTIC ACTIVITY</scope>
    <scope>BIOPHYSICOCHEMICAL PROPERTIES</scope>
</reference>
<dbReference type="EC" id="6.2.1.43" evidence="2"/>
<dbReference type="EMBL" id="AY117439">
    <property type="protein sequence ID" value="AAM77987.1"/>
    <property type="molecule type" value="Genomic_DNA"/>
</dbReference>
<dbReference type="SMR" id="Q84HC5"/>
<dbReference type="KEGG" id="ag:AAM77987"/>
<dbReference type="GO" id="GO:0016878">
    <property type="term" value="F:acid-thiol ligase activity"/>
    <property type="evidence" value="ECO:0000314"/>
    <property type="project" value="UniProtKB"/>
</dbReference>
<dbReference type="GO" id="GO:0005524">
    <property type="term" value="F:ATP binding"/>
    <property type="evidence" value="ECO:0007669"/>
    <property type="project" value="UniProtKB-KW"/>
</dbReference>
<dbReference type="GO" id="GO:0031956">
    <property type="term" value="F:medium-chain fatty acid-CoA ligase activity"/>
    <property type="evidence" value="ECO:0007669"/>
    <property type="project" value="TreeGrafter"/>
</dbReference>
<dbReference type="GO" id="GO:0017000">
    <property type="term" value="P:antibiotic biosynthetic process"/>
    <property type="evidence" value="ECO:0000314"/>
    <property type="project" value="UniProtKB"/>
</dbReference>
<dbReference type="GO" id="GO:0006631">
    <property type="term" value="P:fatty acid metabolic process"/>
    <property type="evidence" value="ECO:0007669"/>
    <property type="project" value="TreeGrafter"/>
</dbReference>
<dbReference type="CDD" id="cd05920">
    <property type="entry name" value="23DHB-AMP_lg"/>
    <property type="match status" value="1"/>
</dbReference>
<dbReference type="FunFam" id="2.30.38.10:FF:000003">
    <property type="entry name" value="Vibriobactin-specific 2,3-dihydroxybenzoate-AMP ligase"/>
    <property type="match status" value="1"/>
</dbReference>
<dbReference type="Gene3D" id="3.30.300.30">
    <property type="match status" value="1"/>
</dbReference>
<dbReference type="Gene3D" id="3.40.50.980">
    <property type="match status" value="2"/>
</dbReference>
<dbReference type="Gene3D" id="2.30.38.10">
    <property type="entry name" value="Luciferase, Domain 3"/>
    <property type="match status" value="1"/>
</dbReference>
<dbReference type="InterPro" id="IPR025110">
    <property type="entry name" value="AMP-bd_C"/>
</dbReference>
<dbReference type="InterPro" id="IPR045851">
    <property type="entry name" value="AMP-bd_C_sf"/>
</dbReference>
<dbReference type="InterPro" id="IPR020845">
    <property type="entry name" value="AMP-binding_CS"/>
</dbReference>
<dbReference type="InterPro" id="IPR000873">
    <property type="entry name" value="AMP-dep_synth/lig_dom"/>
</dbReference>
<dbReference type="PANTHER" id="PTHR43201">
    <property type="entry name" value="ACYL-COA SYNTHETASE"/>
    <property type="match status" value="1"/>
</dbReference>
<dbReference type="PANTHER" id="PTHR43201:SF5">
    <property type="entry name" value="MEDIUM-CHAIN ACYL-COA LIGASE ACSF2, MITOCHONDRIAL"/>
    <property type="match status" value="1"/>
</dbReference>
<dbReference type="Pfam" id="PF00501">
    <property type="entry name" value="AMP-binding"/>
    <property type="match status" value="1"/>
</dbReference>
<dbReference type="Pfam" id="PF13193">
    <property type="entry name" value="AMP-binding_C"/>
    <property type="match status" value="1"/>
</dbReference>
<dbReference type="SUPFAM" id="SSF56801">
    <property type="entry name" value="Acetyl-CoA synthetase-like"/>
    <property type="match status" value="1"/>
</dbReference>
<dbReference type="PROSITE" id="PS00455">
    <property type="entry name" value="AMP_BINDING"/>
    <property type="match status" value="1"/>
</dbReference>
<feature type="chain" id="PRO_0000430702" description="2-hydroxy-7-methoxy-5-methyl-1-naphthoate--CoA ligase">
    <location>
        <begin position="1"/>
        <end position="558"/>
    </location>
</feature>
<feature type="binding site" evidence="1">
    <location>
        <begin position="212"/>
        <end position="213"/>
    </location>
    <ligand>
        <name>ATP</name>
        <dbReference type="ChEBI" id="CHEBI:30616"/>
    </ligand>
</feature>
<feature type="binding site" evidence="1">
    <location>
        <begin position="329"/>
        <end position="331"/>
    </location>
    <ligand>
        <name>ATP</name>
        <dbReference type="ChEBI" id="CHEBI:30616"/>
    </ligand>
</feature>
<feature type="binding site" evidence="1">
    <location>
        <position position="351"/>
    </location>
    <ligand>
        <name>ATP</name>
        <dbReference type="ChEBI" id="CHEBI:30616"/>
    </ligand>
</feature>
<feature type="binding site" evidence="1">
    <location>
        <position position="435"/>
    </location>
    <ligand>
        <name>ATP</name>
        <dbReference type="ChEBI" id="CHEBI:30616"/>
    </ligand>
</feature>
<feature type="binding site" evidence="1">
    <location>
        <position position="450"/>
    </location>
    <ligand>
        <name>ATP</name>
        <dbReference type="ChEBI" id="CHEBI:30616"/>
    </ligand>
</feature>
<feature type="binding site" evidence="1">
    <location>
        <position position="542"/>
    </location>
    <ligand>
        <name>ATP</name>
        <dbReference type="ChEBI" id="CHEBI:30616"/>
    </ligand>
</feature>
<sequence length="558" mass="59990">MHETAAAPAPAGFVPWPDDVAARYTAAGHWEGRSLGTHLAEAARKVPEAVCLVDGPVRMSYSELMARADGAAVRMRGLGIRPADRVVVQLPNCWEHVVVTMACLRLGALPIWALPQYRHRELSGVVTHARASALVVPDVYREFDHQALAHEVAEAQPTVRHVLVAGSDVRPDSVDLRALCEPLDADEAARVAAELDRSAPRGEEVAMLKLSGGTTGLPKLVARTHNDLSYMIKRAAQVCGFGRDTVYLAVLPLGHGFPNTGPGVLGTLLAGGRVVISGSPAPEAAFALMERERVTATSVVPAIVMRWLQYRDERPGADLGSLELMQVGASRLEPEVARQVGPKLGCRLQQVFGMAEGLLCLTRLDDPDDVVHYTQGRPISPDDEIRVVDPEGRTVGVGEPGALLTRGPYTPRGYYDSPSANARAFTPDGWYRTGDLVRRTPDGNLIVVGREKDLINRGGEKINAEEVEGFAVQVDGVLQAAAVGLPDSELGERICLFVVLADGTRVELADVRKVMENAETASFKLPERLITLPSLPTTPMGKIDKKALRAAAGRMSET</sequence>
<evidence type="ECO:0000250" key="1">
    <source>
        <dbReference type="UniProtKB" id="P40871"/>
    </source>
</evidence>
<evidence type="ECO:0000269" key="2">
    <source>
    </source>
</evidence>
<evidence type="ECO:0000303" key="3">
    <source>
    </source>
</evidence>
<evidence type="ECO:0000305" key="4"/>
<evidence type="ECO:0000305" key="5">
    <source>
    </source>
</evidence>
<accession>Q84HC5</accession>
<name>NCSB2_STRCZ</name>